<proteinExistence type="evidence at transcript level"/>
<accession>Q5R8Q8</accession>
<organism>
    <name type="scientific">Pongo abelii</name>
    <name type="common">Sumatran orangutan</name>
    <name type="synonym">Pongo pygmaeus abelii</name>
    <dbReference type="NCBI Taxonomy" id="9601"/>
    <lineage>
        <taxon>Eukaryota</taxon>
        <taxon>Metazoa</taxon>
        <taxon>Chordata</taxon>
        <taxon>Craniata</taxon>
        <taxon>Vertebrata</taxon>
        <taxon>Euteleostomi</taxon>
        <taxon>Mammalia</taxon>
        <taxon>Eutheria</taxon>
        <taxon>Euarchontoglires</taxon>
        <taxon>Primates</taxon>
        <taxon>Haplorrhini</taxon>
        <taxon>Catarrhini</taxon>
        <taxon>Hominidae</taxon>
        <taxon>Pongo</taxon>
    </lineage>
</organism>
<gene>
    <name type="primary">P33MONOX</name>
</gene>
<protein>
    <recommendedName>
        <fullName>Putative monooxygenase p33MONOX</fullName>
        <ecNumber>1.-.-.-</ecNumber>
    </recommendedName>
</protein>
<evidence type="ECO:0000250" key="1"/>
<evidence type="ECO:0000250" key="2">
    <source>
        <dbReference type="UniProtKB" id="Q96A73"/>
    </source>
</evidence>
<evidence type="ECO:0000250" key="3">
    <source>
        <dbReference type="UniProtKB" id="Q9DBN4"/>
    </source>
</evidence>
<evidence type="ECO:0000256" key="4">
    <source>
        <dbReference type="SAM" id="MobiDB-lite"/>
    </source>
</evidence>
<evidence type="ECO:0000305" key="5"/>
<feature type="chain" id="PRO_0000307732" description="Putative monooxygenase p33MONOX">
    <location>
        <begin position="1"/>
        <end position="305"/>
    </location>
</feature>
<feature type="region of interest" description="Disordered" evidence="4">
    <location>
        <begin position="1"/>
        <end position="20"/>
    </location>
</feature>
<feature type="region of interest" description="Disordered" evidence="4">
    <location>
        <begin position="37"/>
        <end position="56"/>
    </location>
</feature>
<feature type="region of interest" description="Disordered" evidence="4">
    <location>
        <begin position="159"/>
        <end position="305"/>
    </location>
</feature>
<feature type="short sequence motif" description="Flavin-containing monooxygenase motif">
    <location>
        <begin position="67"/>
        <end position="77"/>
    </location>
</feature>
<feature type="compositionally biased region" description="Low complexity" evidence="4">
    <location>
        <begin position="169"/>
        <end position="183"/>
    </location>
</feature>
<feature type="compositionally biased region" description="Polar residues" evidence="4">
    <location>
        <begin position="191"/>
        <end position="210"/>
    </location>
</feature>
<feature type="compositionally biased region" description="Polar residues" evidence="4">
    <location>
        <begin position="233"/>
        <end position="243"/>
    </location>
</feature>
<feature type="modified residue" description="Phosphothreonine" evidence="3">
    <location>
        <position position="44"/>
    </location>
</feature>
<feature type="modified residue" description="Phosphothreonine" evidence="3">
    <location>
        <position position="175"/>
    </location>
</feature>
<feature type="modified residue" description="Phosphoserine" evidence="2">
    <location>
        <position position="182"/>
    </location>
</feature>
<feature type="modified residue" description="Phosphoserine" evidence="2">
    <location>
        <position position="183"/>
    </location>
</feature>
<sequence>MASRQPEVPALEASGPLGKMSLPIGIYRRALSYDDTLEDPAPMTPPPSDMGSVPWKPVIPERKYQHLAKVEEGEASLPSPAMTLSSAIDSVDKVPVVKAKATHVIMNSLITKQTQESIQHFERQAGLRDAGYTPHKGLTTEETKYLRVAEALHKLKLQSGEITKEERQPASAQSTPSTTPHSSPKQRSRGWFTSGSSTALPGPNPSTMDSGSGDKDRNLSDKWSLFGPRSLQKYDSGSSTTQAYRGVQKPSPLELIRAQANRMAEDPAALKPPKMDIPVMEGKKQPPRAHNLKPRDLNVLTPTGF</sequence>
<reference key="1">
    <citation type="submission" date="2004-11" db="EMBL/GenBank/DDBJ databases">
        <authorList>
            <consortium name="The German cDNA consortium"/>
        </authorList>
    </citation>
    <scope>NUCLEOTIDE SEQUENCE [LARGE SCALE MRNA]</scope>
    <source>
        <tissue>Kidney</tissue>
    </source>
</reference>
<name>P33MX_PONAB</name>
<dbReference type="EC" id="1.-.-.-"/>
<dbReference type="EMBL" id="CR859693">
    <property type="protein sequence ID" value="CAH91852.1"/>
    <property type="molecule type" value="mRNA"/>
</dbReference>
<dbReference type="SMR" id="Q5R8Q8"/>
<dbReference type="FunCoup" id="Q5R8Q8">
    <property type="interactions" value="188"/>
</dbReference>
<dbReference type="eggNOG" id="ENOG502QRB0">
    <property type="taxonomic scope" value="Eukaryota"/>
</dbReference>
<dbReference type="InParanoid" id="Q5R8Q8"/>
<dbReference type="Proteomes" id="UP000001595">
    <property type="component" value="Unplaced"/>
</dbReference>
<dbReference type="GO" id="GO:0005737">
    <property type="term" value="C:cytoplasm"/>
    <property type="evidence" value="ECO:0000250"/>
    <property type="project" value="UniProtKB"/>
</dbReference>
<dbReference type="GO" id="GO:0016491">
    <property type="term" value="F:oxidoreductase activity"/>
    <property type="evidence" value="ECO:0007669"/>
    <property type="project" value="UniProtKB-KW"/>
</dbReference>
<dbReference type="InterPro" id="IPR026759">
    <property type="entry name" value="P33MONOX"/>
</dbReference>
<dbReference type="PANTHER" id="PTHR28342">
    <property type="entry name" value="MONOOXYGENASE P33MONOX-RELATED"/>
    <property type="match status" value="1"/>
</dbReference>
<dbReference type="PANTHER" id="PTHR28342:SF1">
    <property type="entry name" value="MONOOXYGENASE P33MONOX-RELATED"/>
    <property type="match status" value="1"/>
</dbReference>
<dbReference type="Pfam" id="PF15302">
    <property type="entry name" value="P33MONOX"/>
    <property type="match status" value="1"/>
</dbReference>
<comment type="function">
    <text evidence="1">Potential NADPH-dependent oxidoreductase. May be involved in the regulation of neuronal survival, differentiation and axonal outgrowth (By similarity).</text>
</comment>
<comment type="subunit">
    <text evidence="2">Interacts with NELFB, NOL12 and PRNP.</text>
</comment>
<comment type="subcellular location">
    <subcellularLocation>
        <location evidence="1">Cytoplasm</location>
    </subcellularLocation>
</comment>
<comment type="similarity">
    <text evidence="5">Belongs to the P33MONOX family.</text>
</comment>
<keyword id="KW-0963">Cytoplasm</keyword>
<keyword id="KW-0521">NADP</keyword>
<keyword id="KW-0560">Oxidoreductase</keyword>
<keyword id="KW-0597">Phosphoprotein</keyword>
<keyword id="KW-1185">Reference proteome</keyword>